<proteinExistence type="inferred from homology"/>
<comment type="catalytic activity">
    <reaction evidence="1">
        <text>(6R)-10-formyltetrahydrofolate + 5-amino-1-(5-phospho-beta-D-ribosyl)imidazole-4-carboxamide = 5-formamido-1-(5-phospho-D-ribosyl)imidazole-4-carboxamide + (6S)-5,6,7,8-tetrahydrofolate</text>
        <dbReference type="Rhea" id="RHEA:22192"/>
        <dbReference type="ChEBI" id="CHEBI:57453"/>
        <dbReference type="ChEBI" id="CHEBI:58467"/>
        <dbReference type="ChEBI" id="CHEBI:58475"/>
        <dbReference type="ChEBI" id="CHEBI:195366"/>
        <dbReference type="EC" id="2.1.2.3"/>
    </reaction>
</comment>
<comment type="catalytic activity">
    <reaction evidence="1">
        <text>IMP + H2O = 5-formamido-1-(5-phospho-D-ribosyl)imidazole-4-carboxamide</text>
        <dbReference type="Rhea" id="RHEA:18445"/>
        <dbReference type="ChEBI" id="CHEBI:15377"/>
        <dbReference type="ChEBI" id="CHEBI:58053"/>
        <dbReference type="ChEBI" id="CHEBI:58467"/>
        <dbReference type="EC" id="3.5.4.10"/>
    </reaction>
</comment>
<comment type="pathway">
    <text evidence="1">Purine metabolism; IMP biosynthesis via de novo pathway; 5-formamido-1-(5-phospho-D-ribosyl)imidazole-4-carboxamide from 5-amino-1-(5-phospho-D-ribosyl)imidazole-4-carboxamide (10-formyl THF route): step 1/1.</text>
</comment>
<comment type="pathway">
    <text evidence="1">Purine metabolism; IMP biosynthesis via de novo pathway; IMP from 5-formamido-1-(5-phospho-D-ribosyl)imidazole-4-carboxamide: step 1/1.</text>
</comment>
<comment type="domain">
    <text evidence="1">The IMP cyclohydrolase activity resides in the N-terminal region.</text>
</comment>
<comment type="similarity">
    <text evidence="1">Belongs to the PurH family.</text>
</comment>
<keyword id="KW-0378">Hydrolase</keyword>
<keyword id="KW-0511">Multifunctional enzyme</keyword>
<keyword id="KW-0658">Purine biosynthesis</keyword>
<keyword id="KW-0808">Transferase</keyword>
<sequence length="509" mass="54898">MKRALISVSDKNGIVPFAEKLVELGVEIISTGGTKAAFEQAGVPVTGIEAVTEFPEMLDGRVKTLHPAIHGGLLARRDTAEHMEAIAAHDIKPIDLVIVNLYPFQETIQKPGVTLEEAIENIDIGGPSMLRSAAKNYAAVTVVVDTADYDTVLTELQEHGATTFETRQRLAAKVFRHTAAYDALIAEYLTDVTGETFPEKVTLTYNRKQVLRYGENPHQDAAFYTEPRAIENSISAAKQLHGKELSYNNIRDADAALKIASEFKEPVAVAVKHMNPCGVGVGETIEEAYLKAYEADEISIFGGIVALNKEVDAKTAEHMSKIFLEIIIAPSFSEAGFAILAKKKNIRLLTVPFAGNVEGFEKTSVNGGLLIQANDALVEDTTSYEVVTEKQPTNSEMKALLAQWKIVKHVKSNAIVVGSDKQTLGIGAGQMNRIGSALIALEQAGEKAKGAVLASDAFFPMDDTVEAAAKAGITAIIQPGGSIKDKESIAMADKYGISMVLTHVRHFKH</sequence>
<organism>
    <name type="scientific">Listeria innocua serovar 6a (strain ATCC BAA-680 / CLIP 11262)</name>
    <dbReference type="NCBI Taxonomy" id="272626"/>
    <lineage>
        <taxon>Bacteria</taxon>
        <taxon>Bacillati</taxon>
        <taxon>Bacillota</taxon>
        <taxon>Bacilli</taxon>
        <taxon>Bacillales</taxon>
        <taxon>Listeriaceae</taxon>
        <taxon>Listeria</taxon>
    </lineage>
</organism>
<reference key="1">
    <citation type="journal article" date="2001" name="Science">
        <title>Comparative genomics of Listeria species.</title>
        <authorList>
            <person name="Glaser P."/>
            <person name="Frangeul L."/>
            <person name="Buchrieser C."/>
            <person name="Rusniok C."/>
            <person name="Amend A."/>
            <person name="Baquero F."/>
            <person name="Berche P."/>
            <person name="Bloecker H."/>
            <person name="Brandt P."/>
            <person name="Chakraborty T."/>
            <person name="Charbit A."/>
            <person name="Chetouani F."/>
            <person name="Couve E."/>
            <person name="de Daruvar A."/>
            <person name="Dehoux P."/>
            <person name="Domann E."/>
            <person name="Dominguez-Bernal G."/>
            <person name="Duchaud E."/>
            <person name="Durant L."/>
            <person name="Dussurget O."/>
            <person name="Entian K.-D."/>
            <person name="Fsihi H."/>
            <person name="Garcia-del Portillo F."/>
            <person name="Garrido P."/>
            <person name="Gautier L."/>
            <person name="Goebel W."/>
            <person name="Gomez-Lopez N."/>
            <person name="Hain T."/>
            <person name="Hauf J."/>
            <person name="Jackson D."/>
            <person name="Jones L.-M."/>
            <person name="Kaerst U."/>
            <person name="Kreft J."/>
            <person name="Kuhn M."/>
            <person name="Kunst F."/>
            <person name="Kurapkat G."/>
            <person name="Madueno E."/>
            <person name="Maitournam A."/>
            <person name="Mata Vicente J."/>
            <person name="Ng E."/>
            <person name="Nedjari H."/>
            <person name="Nordsiek G."/>
            <person name="Novella S."/>
            <person name="de Pablos B."/>
            <person name="Perez-Diaz J.-C."/>
            <person name="Purcell R."/>
            <person name="Remmel B."/>
            <person name="Rose M."/>
            <person name="Schlueter T."/>
            <person name="Simoes N."/>
            <person name="Tierrez A."/>
            <person name="Vazquez-Boland J.-A."/>
            <person name="Voss H."/>
            <person name="Wehland J."/>
            <person name="Cossart P."/>
        </authorList>
    </citation>
    <scope>NUCLEOTIDE SEQUENCE [LARGE SCALE GENOMIC DNA]</scope>
    <source>
        <strain>ATCC BAA-680 / CLIP 11262</strain>
    </source>
</reference>
<gene>
    <name evidence="1" type="primary">purH</name>
    <name type="ordered locus">lin1877</name>
</gene>
<evidence type="ECO:0000255" key="1">
    <source>
        <dbReference type="HAMAP-Rule" id="MF_00139"/>
    </source>
</evidence>
<evidence type="ECO:0000255" key="2">
    <source>
        <dbReference type="PROSITE-ProRule" id="PRU01202"/>
    </source>
</evidence>
<accession>Q92AP3</accession>
<dbReference type="EC" id="2.1.2.3" evidence="1"/>
<dbReference type="EC" id="3.5.4.10" evidence="1"/>
<dbReference type="EMBL" id="AL596170">
    <property type="protein sequence ID" value="CAC97107.1"/>
    <property type="molecule type" value="Genomic_DNA"/>
</dbReference>
<dbReference type="PIR" id="AC1667">
    <property type="entry name" value="AC1667"/>
</dbReference>
<dbReference type="RefSeq" id="WP_010991000.1">
    <property type="nucleotide sequence ID" value="NC_003212.1"/>
</dbReference>
<dbReference type="SMR" id="Q92AP3"/>
<dbReference type="STRING" id="272626.gene:17566232"/>
<dbReference type="KEGG" id="lin:purH"/>
<dbReference type="eggNOG" id="COG0138">
    <property type="taxonomic scope" value="Bacteria"/>
</dbReference>
<dbReference type="HOGENOM" id="CLU_016316_5_2_9"/>
<dbReference type="OrthoDB" id="9802065at2"/>
<dbReference type="UniPathway" id="UPA00074">
    <property type="reaction ID" value="UER00133"/>
</dbReference>
<dbReference type="UniPathway" id="UPA00074">
    <property type="reaction ID" value="UER00135"/>
</dbReference>
<dbReference type="Proteomes" id="UP000002513">
    <property type="component" value="Chromosome"/>
</dbReference>
<dbReference type="GO" id="GO:0005829">
    <property type="term" value="C:cytosol"/>
    <property type="evidence" value="ECO:0007669"/>
    <property type="project" value="TreeGrafter"/>
</dbReference>
<dbReference type="GO" id="GO:0003937">
    <property type="term" value="F:IMP cyclohydrolase activity"/>
    <property type="evidence" value="ECO:0007669"/>
    <property type="project" value="UniProtKB-UniRule"/>
</dbReference>
<dbReference type="GO" id="GO:0004643">
    <property type="term" value="F:phosphoribosylaminoimidazolecarboxamide formyltransferase activity"/>
    <property type="evidence" value="ECO:0007669"/>
    <property type="project" value="UniProtKB-UniRule"/>
</dbReference>
<dbReference type="GO" id="GO:0006189">
    <property type="term" value="P:'de novo' IMP biosynthetic process"/>
    <property type="evidence" value="ECO:0007669"/>
    <property type="project" value="UniProtKB-UniRule"/>
</dbReference>
<dbReference type="CDD" id="cd01421">
    <property type="entry name" value="IMPCH"/>
    <property type="match status" value="1"/>
</dbReference>
<dbReference type="FunFam" id="3.40.140.20:FF:000001">
    <property type="entry name" value="Bifunctional purine biosynthesis protein PurH"/>
    <property type="match status" value="1"/>
</dbReference>
<dbReference type="FunFam" id="3.40.140.20:FF:000002">
    <property type="entry name" value="Bifunctional purine biosynthesis protein PurH"/>
    <property type="match status" value="1"/>
</dbReference>
<dbReference type="FunFam" id="3.40.50.1380:FF:000001">
    <property type="entry name" value="Bifunctional purine biosynthesis protein PurH"/>
    <property type="match status" value="1"/>
</dbReference>
<dbReference type="Gene3D" id="3.40.140.20">
    <property type="match status" value="2"/>
</dbReference>
<dbReference type="Gene3D" id="3.40.50.1380">
    <property type="entry name" value="Methylglyoxal synthase-like domain"/>
    <property type="match status" value="1"/>
</dbReference>
<dbReference type="HAMAP" id="MF_00139">
    <property type="entry name" value="PurH"/>
    <property type="match status" value="1"/>
</dbReference>
<dbReference type="InterPro" id="IPR024051">
    <property type="entry name" value="AICAR_Tfase_dup_dom_sf"/>
</dbReference>
<dbReference type="InterPro" id="IPR016193">
    <property type="entry name" value="Cytidine_deaminase-like"/>
</dbReference>
<dbReference type="InterPro" id="IPR011607">
    <property type="entry name" value="MGS-like_dom"/>
</dbReference>
<dbReference type="InterPro" id="IPR036914">
    <property type="entry name" value="MGS-like_dom_sf"/>
</dbReference>
<dbReference type="InterPro" id="IPR002695">
    <property type="entry name" value="PurH-like"/>
</dbReference>
<dbReference type="NCBIfam" id="NF002049">
    <property type="entry name" value="PRK00881.1"/>
    <property type="match status" value="1"/>
</dbReference>
<dbReference type="NCBIfam" id="TIGR00355">
    <property type="entry name" value="purH"/>
    <property type="match status" value="1"/>
</dbReference>
<dbReference type="PANTHER" id="PTHR11692:SF0">
    <property type="entry name" value="BIFUNCTIONAL PURINE BIOSYNTHESIS PROTEIN ATIC"/>
    <property type="match status" value="1"/>
</dbReference>
<dbReference type="PANTHER" id="PTHR11692">
    <property type="entry name" value="BIFUNCTIONAL PURINE BIOSYNTHESIS PROTEIN PURH"/>
    <property type="match status" value="1"/>
</dbReference>
<dbReference type="Pfam" id="PF01808">
    <property type="entry name" value="AICARFT_IMPCHas"/>
    <property type="match status" value="1"/>
</dbReference>
<dbReference type="Pfam" id="PF02142">
    <property type="entry name" value="MGS"/>
    <property type="match status" value="1"/>
</dbReference>
<dbReference type="PIRSF" id="PIRSF000414">
    <property type="entry name" value="AICARFT_IMPCHas"/>
    <property type="match status" value="1"/>
</dbReference>
<dbReference type="SMART" id="SM00798">
    <property type="entry name" value="AICARFT_IMPCHas"/>
    <property type="match status" value="1"/>
</dbReference>
<dbReference type="SMART" id="SM00851">
    <property type="entry name" value="MGS"/>
    <property type="match status" value="1"/>
</dbReference>
<dbReference type="SUPFAM" id="SSF53927">
    <property type="entry name" value="Cytidine deaminase-like"/>
    <property type="match status" value="1"/>
</dbReference>
<dbReference type="SUPFAM" id="SSF52335">
    <property type="entry name" value="Methylglyoxal synthase-like"/>
    <property type="match status" value="1"/>
</dbReference>
<dbReference type="PROSITE" id="PS51855">
    <property type="entry name" value="MGS"/>
    <property type="match status" value="1"/>
</dbReference>
<feature type="chain" id="PRO_0000192101" description="Bifunctional purine biosynthesis protein PurH">
    <location>
        <begin position="1"/>
        <end position="509"/>
    </location>
</feature>
<feature type="domain" description="MGS-like" evidence="2">
    <location>
        <begin position="1"/>
        <end position="144"/>
    </location>
</feature>
<name>PUR9_LISIN</name>
<protein>
    <recommendedName>
        <fullName evidence="1">Bifunctional purine biosynthesis protein PurH</fullName>
    </recommendedName>
    <domain>
        <recommendedName>
            <fullName evidence="1">Phosphoribosylaminoimidazolecarboxamide formyltransferase</fullName>
            <ecNumber evidence="1">2.1.2.3</ecNumber>
        </recommendedName>
        <alternativeName>
            <fullName evidence="1">AICAR transformylase</fullName>
        </alternativeName>
    </domain>
    <domain>
        <recommendedName>
            <fullName evidence="1">IMP cyclohydrolase</fullName>
            <ecNumber evidence="1">3.5.4.10</ecNumber>
        </recommendedName>
        <alternativeName>
            <fullName evidence="1">ATIC</fullName>
        </alternativeName>
        <alternativeName>
            <fullName evidence="1">IMP synthase</fullName>
        </alternativeName>
        <alternativeName>
            <fullName evidence="1">Inosinicase</fullName>
        </alternativeName>
    </domain>
</protein>